<sequence length="209" mass="22814">MLTAIRKNGLILAVFACVSTGLVALTYALTAEQIQQQEQKQLLQVLNQVIPHKYHDNPLAQACTLVNDDKLGTAKTMHAYLAQRDGQPTAIAIETIAPDGYNGEIKLIVGIANNGTVLGVRVLAHQETPGLGDKIDLRISNWVLGFNGQQVTADNQDDWKVRKDGGQFDQFTGATITPRAVVLAVKKAVEYVNQHQQQLHNQPNPCEGQ</sequence>
<dbReference type="EC" id="7.-.-.-" evidence="1"/>
<dbReference type="EMBL" id="AE003852">
    <property type="protein sequence ID" value="AAF94174.1"/>
    <property type="molecule type" value="Genomic_DNA"/>
</dbReference>
<dbReference type="PIR" id="C82252">
    <property type="entry name" value="C82252"/>
</dbReference>
<dbReference type="RefSeq" id="NP_230659.1">
    <property type="nucleotide sequence ID" value="NC_002505.1"/>
</dbReference>
<dbReference type="SMR" id="Q9KT90"/>
<dbReference type="STRING" id="243277.VC_1013"/>
<dbReference type="DNASU" id="2614266"/>
<dbReference type="EnsemblBacteria" id="AAF94174">
    <property type="protein sequence ID" value="AAF94174"/>
    <property type="gene ID" value="VC_1013"/>
</dbReference>
<dbReference type="KEGG" id="vch:VC_1013"/>
<dbReference type="PATRIC" id="fig|243277.26.peg.967"/>
<dbReference type="eggNOG" id="COG4659">
    <property type="taxonomic scope" value="Bacteria"/>
</dbReference>
<dbReference type="HOGENOM" id="CLU_077882_1_0_6"/>
<dbReference type="Proteomes" id="UP000000584">
    <property type="component" value="Chromosome 1"/>
</dbReference>
<dbReference type="GO" id="GO:1990204">
    <property type="term" value="C:oxidoreductase complex"/>
    <property type="evidence" value="ECO:0000318"/>
    <property type="project" value="GO_Central"/>
</dbReference>
<dbReference type="GO" id="GO:0005886">
    <property type="term" value="C:plasma membrane"/>
    <property type="evidence" value="ECO:0000318"/>
    <property type="project" value="GO_Central"/>
</dbReference>
<dbReference type="GO" id="GO:0009055">
    <property type="term" value="F:electron transfer activity"/>
    <property type="evidence" value="ECO:0007669"/>
    <property type="project" value="InterPro"/>
</dbReference>
<dbReference type="GO" id="GO:0010181">
    <property type="term" value="F:FMN binding"/>
    <property type="evidence" value="ECO:0007669"/>
    <property type="project" value="InterPro"/>
</dbReference>
<dbReference type="GO" id="GO:0016651">
    <property type="term" value="F:oxidoreductase activity, acting on NAD(P)H"/>
    <property type="evidence" value="ECO:0000318"/>
    <property type="project" value="GO_Central"/>
</dbReference>
<dbReference type="GO" id="GO:0022900">
    <property type="term" value="P:electron transport chain"/>
    <property type="evidence" value="ECO:0007669"/>
    <property type="project" value="UniProtKB-UniRule"/>
</dbReference>
<dbReference type="HAMAP" id="MF_00479">
    <property type="entry name" value="RsxG_RnfG"/>
    <property type="match status" value="1"/>
</dbReference>
<dbReference type="InterPro" id="IPR007329">
    <property type="entry name" value="FMN-bd"/>
</dbReference>
<dbReference type="InterPro" id="IPR010209">
    <property type="entry name" value="Ion_transpt_RnfG/RsxG"/>
</dbReference>
<dbReference type="NCBIfam" id="NF002519">
    <property type="entry name" value="PRK01908.1"/>
    <property type="match status" value="1"/>
</dbReference>
<dbReference type="NCBIfam" id="TIGR01947">
    <property type="entry name" value="rnfG"/>
    <property type="match status" value="1"/>
</dbReference>
<dbReference type="PANTHER" id="PTHR36118">
    <property type="entry name" value="ION-TRANSLOCATING OXIDOREDUCTASE COMPLEX SUBUNIT G"/>
    <property type="match status" value="1"/>
</dbReference>
<dbReference type="PANTHER" id="PTHR36118:SF1">
    <property type="entry name" value="ION-TRANSLOCATING OXIDOREDUCTASE COMPLEX SUBUNIT G"/>
    <property type="match status" value="1"/>
</dbReference>
<dbReference type="Pfam" id="PF04205">
    <property type="entry name" value="FMN_bind"/>
    <property type="match status" value="1"/>
</dbReference>
<dbReference type="PIRSF" id="PIRSF006091">
    <property type="entry name" value="E_trnsport_RnfG"/>
    <property type="match status" value="1"/>
</dbReference>
<dbReference type="SMART" id="SM00900">
    <property type="entry name" value="FMN_bind"/>
    <property type="match status" value="1"/>
</dbReference>
<proteinExistence type="inferred from homology"/>
<protein>
    <recommendedName>
        <fullName evidence="1">Ion-translocating oxidoreductase complex subunit G</fullName>
        <ecNumber evidence="1">7.-.-.-</ecNumber>
    </recommendedName>
    <alternativeName>
        <fullName evidence="1">Rnf electron transport complex subunit G</fullName>
    </alternativeName>
</protein>
<name>RNFG_VIBCH</name>
<comment type="function">
    <text evidence="1">Part of a membrane-bound complex that couples electron transfer with translocation of ions across the membrane.</text>
</comment>
<comment type="cofactor">
    <cofactor evidence="1">
        <name>FMN</name>
        <dbReference type="ChEBI" id="CHEBI:58210"/>
    </cofactor>
</comment>
<comment type="subunit">
    <text evidence="1">The complex is composed of six subunits: RnfA, RnfB, RnfC, RnfD, RnfE and RnfG.</text>
</comment>
<comment type="subcellular location">
    <subcellularLocation>
        <location evidence="1">Cell inner membrane</location>
        <topology evidence="1">Single-pass membrane protein</topology>
    </subcellularLocation>
</comment>
<comment type="similarity">
    <text evidence="1">Belongs to the RnfG family.</text>
</comment>
<accession>Q9KT90</accession>
<evidence type="ECO:0000255" key="1">
    <source>
        <dbReference type="HAMAP-Rule" id="MF_00479"/>
    </source>
</evidence>
<feature type="chain" id="PRO_0000214642" description="Ion-translocating oxidoreductase complex subunit G">
    <location>
        <begin position="1"/>
        <end position="209"/>
    </location>
</feature>
<feature type="transmembrane region" description="Helical" evidence="1">
    <location>
        <begin position="9"/>
        <end position="29"/>
    </location>
</feature>
<feature type="modified residue" description="FMN phosphoryl threonine" evidence="1">
    <location>
        <position position="175"/>
    </location>
</feature>
<reference key="1">
    <citation type="journal article" date="2000" name="Nature">
        <title>DNA sequence of both chromosomes of the cholera pathogen Vibrio cholerae.</title>
        <authorList>
            <person name="Heidelberg J.F."/>
            <person name="Eisen J.A."/>
            <person name="Nelson W.C."/>
            <person name="Clayton R.A."/>
            <person name="Gwinn M.L."/>
            <person name="Dodson R.J."/>
            <person name="Haft D.H."/>
            <person name="Hickey E.K."/>
            <person name="Peterson J.D."/>
            <person name="Umayam L.A."/>
            <person name="Gill S.R."/>
            <person name="Nelson K.E."/>
            <person name="Read T.D."/>
            <person name="Tettelin H."/>
            <person name="Richardson D.L."/>
            <person name="Ermolaeva M.D."/>
            <person name="Vamathevan J.J."/>
            <person name="Bass S."/>
            <person name="Qin H."/>
            <person name="Dragoi I."/>
            <person name="Sellers P."/>
            <person name="McDonald L.A."/>
            <person name="Utterback T.R."/>
            <person name="Fleischmann R.D."/>
            <person name="Nierman W.C."/>
            <person name="White O."/>
            <person name="Salzberg S.L."/>
            <person name="Smith H.O."/>
            <person name="Colwell R.R."/>
            <person name="Mekalanos J.J."/>
            <person name="Venter J.C."/>
            <person name="Fraser C.M."/>
        </authorList>
    </citation>
    <scope>NUCLEOTIDE SEQUENCE [LARGE SCALE GENOMIC DNA]</scope>
    <source>
        <strain>ATCC 39315 / El Tor Inaba N16961</strain>
    </source>
</reference>
<gene>
    <name evidence="1" type="primary">rnfG</name>
    <name type="ordered locus">VC_1013</name>
</gene>
<organism>
    <name type="scientific">Vibrio cholerae serotype O1 (strain ATCC 39315 / El Tor Inaba N16961)</name>
    <dbReference type="NCBI Taxonomy" id="243277"/>
    <lineage>
        <taxon>Bacteria</taxon>
        <taxon>Pseudomonadati</taxon>
        <taxon>Pseudomonadota</taxon>
        <taxon>Gammaproteobacteria</taxon>
        <taxon>Vibrionales</taxon>
        <taxon>Vibrionaceae</taxon>
        <taxon>Vibrio</taxon>
    </lineage>
</organism>
<keyword id="KW-0997">Cell inner membrane</keyword>
<keyword id="KW-1003">Cell membrane</keyword>
<keyword id="KW-0249">Electron transport</keyword>
<keyword id="KW-0285">Flavoprotein</keyword>
<keyword id="KW-0288">FMN</keyword>
<keyword id="KW-0472">Membrane</keyword>
<keyword id="KW-0597">Phosphoprotein</keyword>
<keyword id="KW-1185">Reference proteome</keyword>
<keyword id="KW-1278">Translocase</keyword>
<keyword id="KW-0812">Transmembrane</keyword>
<keyword id="KW-1133">Transmembrane helix</keyword>
<keyword id="KW-0813">Transport</keyword>